<comment type="function">
    <text evidence="1">This is one of the proteins that binds to the 5S RNA in the ribosome where it forms part of the central protuberance.</text>
</comment>
<comment type="subunit">
    <text evidence="1">Part of the 50S ribosomal subunit; part of the 5S rRNA/L5/L18/L25 subcomplex. Contacts the 5S rRNA. Binds to the 5S rRNA independently of L5 and L18.</text>
</comment>
<comment type="similarity">
    <text evidence="1">Belongs to the bacterial ribosomal protein bL25 family. CTC subfamily.</text>
</comment>
<organism>
    <name type="scientific">Staphylococcus aureus (strain MSSA476)</name>
    <dbReference type="NCBI Taxonomy" id="282459"/>
    <lineage>
        <taxon>Bacteria</taxon>
        <taxon>Bacillati</taxon>
        <taxon>Bacillota</taxon>
        <taxon>Bacilli</taxon>
        <taxon>Bacillales</taxon>
        <taxon>Staphylococcaceae</taxon>
        <taxon>Staphylococcus</taxon>
    </lineage>
</organism>
<reference key="1">
    <citation type="journal article" date="2004" name="Proc. Natl. Acad. Sci. U.S.A.">
        <title>Complete genomes of two clinical Staphylococcus aureus strains: evidence for the rapid evolution of virulence and drug resistance.</title>
        <authorList>
            <person name="Holden M.T.G."/>
            <person name="Feil E.J."/>
            <person name="Lindsay J.A."/>
            <person name="Peacock S.J."/>
            <person name="Day N.P.J."/>
            <person name="Enright M.C."/>
            <person name="Foster T.J."/>
            <person name="Moore C.E."/>
            <person name="Hurst L."/>
            <person name="Atkin R."/>
            <person name="Barron A."/>
            <person name="Bason N."/>
            <person name="Bentley S.D."/>
            <person name="Chillingworth C."/>
            <person name="Chillingworth T."/>
            <person name="Churcher C."/>
            <person name="Clark L."/>
            <person name="Corton C."/>
            <person name="Cronin A."/>
            <person name="Doggett J."/>
            <person name="Dowd L."/>
            <person name="Feltwell T."/>
            <person name="Hance Z."/>
            <person name="Harris B."/>
            <person name="Hauser H."/>
            <person name="Holroyd S."/>
            <person name="Jagels K."/>
            <person name="James K.D."/>
            <person name="Lennard N."/>
            <person name="Line A."/>
            <person name="Mayes R."/>
            <person name="Moule S."/>
            <person name="Mungall K."/>
            <person name="Ormond D."/>
            <person name="Quail M.A."/>
            <person name="Rabbinowitsch E."/>
            <person name="Rutherford K.M."/>
            <person name="Sanders M."/>
            <person name="Sharp S."/>
            <person name="Simmonds M."/>
            <person name="Stevens K."/>
            <person name="Whitehead S."/>
            <person name="Barrell B.G."/>
            <person name="Spratt B.G."/>
            <person name="Parkhill J."/>
        </authorList>
    </citation>
    <scope>NUCLEOTIDE SEQUENCE [LARGE SCALE GENOMIC DNA]</scope>
    <source>
        <strain>MSSA476</strain>
    </source>
</reference>
<protein>
    <recommendedName>
        <fullName evidence="1">Large ribosomal subunit protein bL25</fullName>
    </recommendedName>
    <alternativeName>
        <fullName evidence="3">50S ribosomal protein L25</fullName>
    </alternativeName>
    <alternativeName>
        <fullName evidence="1">General stress protein CTC</fullName>
    </alternativeName>
</protein>
<accession>Q6GBY7</accession>
<evidence type="ECO:0000255" key="1">
    <source>
        <dbReference type="HAMAP-Rule" id="MF_01334"/>
    </source>
</evidence>
<evidence type="ECO:0000256" key="2">
    <source>
        <dbReference type="SAM" id="MobiDB-lite"/>
    </source>
</evidence>
<evidence type="ECO:0000305" key="3"/>
<proteinExistence type="inferred from homology"/>
<dbReference type="EMBL" id="BX571857">
    <property type="protein sequence ID" value="CAG42233.1"/>
    <property type="molecule type" value="Genomic_DNA"/>
</dbReference>
<dbReference type="RefSeq" id="WP_000157650.1">
    <property type="nucleotide sequence ID" value="NC_002953.3"/>
</dbReference>
<dbReference type="SMR" id="Q6GBY7"/>
<dbReference type="KEGG" id="sas:SAS0458"/>
<dbReference type="HOGENOM" id="CLU_075939_2_1_9"/>
<dbReference type="GO" id="GO:0022625">
    <property type="term" value="C:cytosolic large ribosomal subunit"/>
    <property type="evidence" value="ECO:0007669"/>
    <property type="project" value="TreeGrafter"/>
</dbReference>
<dbReference type="GO" id="GO:0008097">
    <property type="term" value="F:5S rRNA binding"/>
    <property type="evidence" value="ECO:0007669"/>
    <property type="project" value="InterPro"/>
</dbReference>
<dbReference type="GO" id="GO:0003735">
    <property type="term" value="F:structural constituent of ribosome"/>
    <property type="evidence" value="ECO:0007669"/>
    <property type="project" value="InterPro"/>
</dbReference>
<dbReference type="GO" id="GO:0006412">
    <property type="term" value="P:translation"/>
    <property type="evidence" value="ECO:0007669"/>
    <property type="project" value="UniProtKB-UniRule"/>
</dbReference>
<dbReference type="CDD" id="cd00495">
    <property type="entry name" value="Ribosomal_L25_TL5_CTC"/>
    <property type="match status" value="1"/>
</dbReference>
<dbReference type="FunFam" id="2.40.240.10:FF:000013">
    <property type="entry name" value="50S ribosomal protein L25"/>
    <property type="match status" value="1"/>
</dbReference>
<dbReference type="Gene3D" id="2.170.120.20">
    <property type="entry name" value="Ribosomal protein L25, beta domain"/>
    <property type="match status" value="1"/>
</dbReference>
<dbReference type="Gene3D" id="2.40.240.10">
    <property type="entry name" value="Ribosomal Protein L25, Chain P"/>
    <property type="match status" value="1"/>
</dbReference>
<dbReference type="HAMAP" id="MF_01334">
    <property type="entry name" value="Ribosomal_bL25_CTC"/>
    <property type="match status" value="1"/>
</dbReference>
<dbReference type="InterPro" id="IPR020056">
    <property type="entry name" value="Rbsml_bL25/Gln-tRNA_synth_N"/>
</dbReference>
<dbReference type="InterPro" id="IPR011035">
    <property type="entry name" value="Ribosomal_bL25/Gln-tRNA_synth"/>
</dbReference>
<dbReference type="InterPro" id="IPR020057">
    <property type="entry name" value="Ribosomal_bL25_b-dom"/>
</dbReference>
<dbReference type="InterPro" id="IPR037121">
    <property type="entry name" value="Ribosomal_bL25_C"/>
</dbReference>
<dbReference type="InterPro" id="IPR001021">
    <property type="entry name" value="Ribosomal_bL25_long"/>
</dbReference>
<dbReference type="InterPro" id="IPR029751">
    <property type="entry name" value="Ribosomal_L25_dom"/>
</dbReference>
<dbReference type="InterPro" id="IPR020930">
    <property type="entry name" value="Ribosomal_uL5_bac-type"/>
</dbReference>
<dbReference type="NCBIfam" id="TIGR00731">
    <property type="entry name" value="bL25_bact_ctc"/>
    <property type="match status" value="1"/>
</dbReference>
<dbReference type="NCBIfam" id="NF004133">
    <property type="entry name" value="PRK05618.2-4"/>
    <property type="match status" value="1"/>
</dbReference>
<dbReference type="NCBIfam" id="NF004134">
    <property type="entry name" value="PRK05618.2-5"/>
    <property type="match status" value="1"/>
</dbReference>
<dbReference type="PANTHER" id="PTHR33284">
    <property type="entry name" value="RIBOSOMAL PROTEIN L25/GLN-TRNA SYNTHETASE, ANTI-CODON-BINDING DOMAIN-CONTAINING PROTEIN"/>
    <property type="match status" value="1"/>
</dbReference>
<dbReference type="PANTHER" id="PTHR33284:SF1">
    <property type="entry name" value="RIBOSOMAL PROTEIN L25_GLN-TRNA SYNTHETASE, ANTI-CODON-BINDING DOMAIN-CONTAINING PROTEIN"/>
    <property type="match status" value="1"/>
</dbReference>
<dbReference type="Pfam" id="PF01386">
    <property type="entry name" value="Ribosomal_L25p"/>
    <property type="match status" value="1"/>
</dbReference>
<dbReference type="Pfam" id="PF14693">
    <property type="entry name" value="Ribosomal_TL5_C"/>
    <property type="match status" value="1"/>
</dbReference>
<dbReference type="SUPFAM" id="SSF50715">
    <property type="entry name" value="Ribosomal protein L25-like"/>
    <property type="match status" value="1"/>
</dbReference>
<feature type="chain" id="PRO_0000181596" description="Large ribosomal subunit protein bL25">
    <location>
        <begin position="1"/>
        <end position="217"/>
    </location>
</feature>
<feature type="region of interest" description="Disordered" evidence="2">
    <location>
        <begin position="178"/>
        <end position="217"/>
    </location>
</feature>
<feature type="compositionally biased region" description="Acidic residues" evidence="2">
    <location>
        <begin position="184"/>
        <end position="205"/>
    </location>
</feature>
<feature type="compositionally biased region" description="Basic and acidic residues" evidence="2">
    <location>
        <begin position="206"/>
        <end position="217"/>
    </location>
</feature>
<gene>
    <name evidence="1" type="primary">rplY</name>
    <name evidence="1" type="synonym">ctc</name>
    <name type="ordered locus">SAS0458</name>
</gene>
<name>RL25_STAAS</name>
<sequence length="217" mass="23788">MASLKSIIRQGKQTRSDLKQLRKSGKVPAVVYGYGTKNVSVKVDEVEFIKVIREVGRNGVIELGVGSKTIKVMVADYQFDPLKNQITHIDFLAINMSEERTVEVPVQLVGEAVGAKEGGVVEQPLFNLEVTATPDNIPEAIEVDITELNINDSLTVADVKVTGDFKIENDSAESVVTVVAPTEEPTEEEIEAMEGEQQTEEPEVVGESKEDEEKTEE</sequence>
<keyword id="KW-0687">Ribonucleoprotein</keyword>
<keyword id="KW-0689">Ribosomal protein</keyword>
<keyword id="KW-0694">RNA-binding</keyword>
<keyword id="KW-0699">rRNA-binding</keyword>